<keyword id="KW-0418">Kinase</keyword>
<keyword id="KW-1185">Reference proteome</keyword>
<keyword id="KW-0808">Transferase</keyword>
<sequence length="545" mass="58926">MGSWYYVGVDVGSASVRAALVSPDGQLRRTAEEPIAVHEPCVDHYEQSSTEIWSKCCQTVKRVTEGVDAACVRGIGFDGTCSLVVLDQQFRPLAVNLAGVCDRNVVMWMDHRAAAQASRITACRHTLLQRVGGVMSPEIQPPKLLWLKENLPDSCWTRAAHFFDLPDFLSWKATGSLSRSLCTLVCKWTYSASEGWDDTFWSAIGLEDLIEDSYARIGSQVCCPGAAVGRGLTAAAAADLGLNEGTAVGASLIDAHAGGIGVLGADVSGLHLPCEHQPLTARMALICGTSSCHMAVSREPLLVPGVWGPYLSAMLPGLWLNEGGQSATGKLLDHVVKGHAAFRQLEEQAEHSGRHIYTQLNLHLQQMSTDATHLEQLTTHLHIWPDFHGNRSPLADQTARGTVVGLSLSQTLDDLALLYLATLQALALGSRHIIAAMTEAGHDITTLFLCGGLSKNTLFVQTHANTTGLPVVLPAEREAVLLGAAVIGACASSDCTSIPEAMRKMSRVGRVVRPNPELQSFYRRKYSVFLRLYQHQKECVSLMED</sequence>
<reference key="1">
    <citation type="submission" date="2004-04" db="EMBL/GenBank/DDBJ databases">
        <authorList>
            <consortium name="NIH - Zebrafish Gene Collection (ZGC) project"/>
        </authorList>
    </citation>
    <scope>NUCLEOTIDE SEQUENCE [LARGE SCALE MRNA]</scope>
    <source>
        <tissue>Embryo</tissue>
    </source>
</reference>
<comment type="similarity">
    <text evidence="1">Belongs to the FGGY kinase family.</text>
</comment>
<comment type="sequence caution" evidence="1">
    <conflict type="erroneous initiation">
        <sequence resource="EMBL-CDS" id="AAH68399"/>
    </conflict>
</comment>
<name>FGGY_DANRE</name>
<proteinExistence type="evidence at transcript level"/>
<accession>Q6NUW9</accession>
<dbReference type="EC" id="2.7.1.-"/>
<dbReference type="EMBL" id="BC068399">
    <property type="protein sequence ID" value="AAH68399.1"/>
    <property type="status" value="ALT_INIT"/>
    <property type="molecule type" value="mRNA"/>
</dbReference>
<dbReference type="RefSeq" id="NP_998446.2">
    <property type="nucleotide sequence ID" value="NM_213281.1"/>
</dbReference>
<dbReference type="SMR" id="Q6NUW9"/>
<dbReference type="FunCoup" id="Q6NUW9">
    <property type="interactions" value="553"/>
</dbReference>
<dbReference type="STRING" id="7955.ENSDARP00000124076"/>
<dbReference type="PaxDb" id="7955-ENSDARP00000056457"/>
<dbReference type="GeneID" id="406567"/>
<dbReference type="KEGG" id="dre:406567"/>
<dbReference type="AGR" id="ZFIN:ZDB-GENE-040426-2461"/>
<dbReference type="CTD" id="55277"/>
<dbReference type="ZFIN" id="ZDB-GENE-040426-2461">
    <property type="gene designation" value="fggy"/>
</dbReference>
<dbReference type="eggNOG" id="KOG2517">
    <property type="taxonomic scope" value="Eukaryota"/>
</dbReference>
<dbReference type="InParanoid" id="Q6NUW9"/>
<dbReference type="OrthoDB" id="203824at2759"/>
<dbReference type="PhylomeDB" id="Q6NUW9"/>
<dbReference type="PRO" id="PR:Q6NUW9"/>
<dbReference type="Proteomes" id="UP000000437">
    <property type="component" value="Chromosome 2"/>
</dbReference>
<dbReference type="GO" id="GO:0005737">
    <property type="term" value="C:cytoplasm"/>
    <property type="evidence" value="ECO:0000318"/>
    <property type="project" value="GO_Central"/>
</dbReference>
<dbReference type="GO" id="GO:0019150">
    <property type="term" value="F:D-ribulokinase activity"/>
    <property type="evidence" value="ECO:0000318"/>
    <property type="project" value="GO_Central"/>
</dbReference>
<dbReference type="GO" id="GO:0019321">
    <property type="term" value="P:pentose metabolic process"/>
    <property type="evidence" value="ECO:0000318"/>
    <property type="project" value="GO_Central"/>
</dbReference>
<dbReference type="CDD" id="cd07782">
    <property type="entry name" value="ASKHA_NBD_FGGY_D-RBK"/>
    <property type="match status" value="1"/>
</dbReference>
<dbReference type="FunFam" id="3.30.420.40:FF:000101">
    <property type="entry name" value="FGGY carbohydrate kinase domain-containing protein"/>
    <property type="match status" value="1"/>
</dbReference>
<dbReference type="Gene3D" id="1.20.58.2240">
    <property type="match status" value="1"/>
</dbReference>
<dbReference type="Gene3D" id="3.30.420.40">
    <property type="match status" value="1"/>
</dbReference>
<dbReference type="InterPro" id="IPR043129">
    <property type="entry name" value="ATPase_NBD"/>
</dbReference>
<dbReference type="InterPro" id="IPR000577">
    <property type="entry name" value="Carb_kinase_FGGY"/>
</dbReference>
<dbReference type="InterPro" id="IPR018485">
    <property type="entry name" value="FGGY_C"/>
</dbReference>
<dbReference type="InterPro" id="IPR018484">
    <property type="entry name" value="FGGY_N"/>
</dbReference>
<dbReference type="InterPro" id="IPR006003">
    <property type="entry name" value="FGGY_RbtK-like"/>
</dbReference>
<dbReference type="NCBIfam" id="TIGR01315">
    <property type="entry name" value="5C_CHO_kinase"/>
    <property type="match status" value="1"/>
</dbReference>
<dbReference type="PANTHER" id="PTHR43435:SF4">
    <property type="entry name" value="FGGY CARBOHYDRATE KINASE DOMAIN-CONTAINING PROTEIN"/>
    <property type="match status" value="1"/>
</dbReference>
<dbReference type="PANTHER" id="PTHR43435">
    <property type="entry name" value="RIBULOKINASE"/>
    <property type="match status" value="1"/>
</dbReference>
<dbReference type="Pfam" id="PF02782">
    <property type="entry name" value="FGGY_C"/>
    <property type="match status" value="1"/>
</dbReference>
<dbReference type="Pfam" id="PF00370">
    <property type="entry name" value="FGGY_N"/>
    <property type="match status" value="1"/>
</dbReference>
<dbReference type="PIRSF" id="PIRSF000538">
    <property type="entry name" value="GlpK"/>
    <property type="match status" value="1"/>
</dbReference>
<dbReference type="SUPFAM" id="SSF53067">
    <property type="entry name" value="Actin-like ATPase domain"/>
    <property type="match status" value="2"/>
</dbReference>
<feature type="chain" id="PRO_0000326454" description="FGGY carbohydrate kinase domain-containing protein">
    <location>
        <begin position="1"/>
        <end position="545"/>
    </location>
</feature>
<organism>
    <name type="scientific">Danio rerio</name>
    <name type="common">Zebrafish</name>
    <name type="synonym">Brachydanio rerio</name>
    <dbReference type="NCBI Taxonomy" id="7955"/>
    <lineage>
        <taxon>Eukaryota</taxon>
        <taxon>Metazoa</taxon>
        <taxon>Chordata</taxon>
        <taxon>Craniata</taxon>
        <taxon>Vertebrata</taxon>
        <taxon>Euteleostomi</taxon>
        <taxon>Actinopterygii</taxon>
        <taxon>Neopterygii</taxon>
        <taxon>Teleostei</taxon>
        <taxon>Ostariophysi</taxon>
        <taxon>Cypriniformes</taxon>
        <taxon>Danionidae</taxon>
        <taxon>Danioninae</taxon>
        <taxon>Danio</taxon>
    </lineage>
</organism>
<gene>
    <name type="primary">fggy</name>
    <name type="ORF">zgc:85818</name>
</gene>
<protein>
    <recommendedName>
        <fullName>FGGY carbohydrate kinase domain-containing protein</fullName>
        <ecNumber>2.7.1.-</ecNumber>
    </recommendedName>
</protein>
<evidence type="ECO:0000305" key="1"/>